<gene>
    <name type="ORF">DDB_G0271356</name>
</gene>
<protein>
    <recommendedName>
        <fullName>LIM domain-containing protein DDB_G0271356</fullName>
    </recommendedName>
</protein>
<keyword id="KW-0440">LIM domain</keyword>
<keyword id="KW-0479">Metal-binding</keyword>
<keyword id="KW-1185">Reference proteome</keyword>
<keyword id="KW-0677">Repeat</keyword>
<keyword id="KW-0862">Zinc</keyword>
<reference key="1">
    <citation type="journal article" date="2002" name="Nature">
        <title>Sequence and analysis of chromosome 2 of Dictyostelium discoideum.</title>
        <authorList>
            <person name="Gloeckner G."/>
            <person name="Eichinger L."/>
            <person name="Szafranski K."/>
            <person name="Pachebat J.A."/>
            <person name="Bankier A.T."/>
            <person name="Dear P.H."/>
            <person name="Lehmann R."/>
            <person name="Baumgart C."/>
            <person name="Parra G."/>
            <person name="Abril J.F."/>
            <person name="Guigo R."/>
            <person name="Kumpf K."/>
            <person name="Tunggal B."/>
            <person name="Cox E.C."/>
            <person name="Quail M.A."/>
            <person name="Platzer M."/>
            <person name="Rosenthal A."/>
            <person name="Noegel A.A."/>
        </authorList>
    </citation>
    <scope>NUCLEOTIDE SEQUENCE [LARGE SCALE GENOMIC DNA]</scope>
    <source>
        <strain>AX4</strain>
    </source>
</reference>
<reference key="2">
    <citation type="journal article" date="2005" name="Nature">
        <title>The genome of the social amoeba Dictyostelium discoideum.</title>
        <authorList>
            <person name="Eichinger L."/>
            <person name="Pachebat J.A."/>
            <person name="Gloeckner G."/>
            <person name="Rajandream M.A."/>
            <person name="Sucgang R."/>
            <person name="Berriman M."/>
            <person name="Song J."/>
            <person name="Olsen R."/>
            <person name="Szafranski K."/>
            <person name="Xu Q."/>
            <person name="Tunggal B."/>
            <person name="Kummerfeld S."/>
            <person name="Madera M."/>
            <person name="Konfortov B.A."/>
            <person name="Rivero F."/>
            <person name="Bankier A.T."/>
            <person name="Lehmann R."/>
            <person name="Hamlin N."/>
            <person name="Davies R."/>
            <person name="Gaudet P."/>
            <person name="Fey P."/>
            <person name="Pilcher K."/>
            <person name="Chen G."/>
            <person name="Saunders D."/>
            <person name="Sodergren E.J."/>
            <person name="Davis P."/>
            <person name="Kerhornou A."/>
            <person name="Nie X."/>
            <person name="Hall N."/>
            <person name="Anjard C."/>
            <person name="Hemphill L."/>
            <person name="Bason N."/>
            <person name="Farbrother P."/>
            <person name="Desany B."/>
            <person name="Just E."/>
            <person name="Morio T."/>
            <person name="Rost R."/>
            <person name="Churcher C.M."/>
            <person name="Cooper J."/>
            <person name="Haydock S."/>
            <person name="van Driessche N."/>
            <person name="Cronin A."/>
            <person name="Goodhead I."/>
            <person name="Muzny D.M."/>
            <person name="Mourier T."/>
            <person name="Pain A."/>
            <person name="Lu M."/>
            <person name="Harper D."/>
            <person name="Lindsay R."/>
            <person name="Hauser H."/>
            <person name="James K.D."/>
            <person name="Quiles M."/>
            <person name="Madan Babu M."/>
            <person name="Saito T."/>
            <person name="Buchrieser C."/>
            <person name="Wardroper A."/>
            <person name="Felder M."/>
            <person name="Thangavelu M."/>
            <person name="Johnson D."/>
            <person name="Knights A."/>
            <person name="Loulseged H."/>
            <person name="Mungall K.L."/>
            <person name="Oliver K."/>
            <person name="Price C."/>
            <person name="Quail M.A."/>
            <person name="Urushihara H."/>
            <person name="Hernandez J."/>
            <person name="Rabbinowitsch E."/>
            <person name="Steffen D."/>
            <person name="Sanders M."/>
            <person name="Ma J."/>
            <person name="Kohara Y."/>
            <person name="Sharp S."/>
            <person name="Simmonds M.N."/>
            <person name="Spiegler S."/>
            <person name="Tivey A."/>
            <person name="Sugano S."/>
            <person name="White B."/>
            <person name="Walker D."/>
            <person name="Woodward J.R."/>
            <person name="Winckler T."/>
            <person name="Tanaka Y."/>
            <person name="Shaulsky G."/>
            <person name="Schleicher M."/>
            <person name="Weinstock G.M."/>
            <person name="Rosenthal A."/>
            <person name="Cox E.C."/>
            <person name="Chisholm R.L."/>
            <person name="Gibbs R.A."/>
            <person name="Loomis W.F."/>
            <person name="Platzer M."/>
            <person name="Kay R.R."/>
            <person name="Williams J.G."/>
            <person name="Dear P.H."/>
            <person name="Noegel A.A."/>
            <person name="Barrell B.G."/>
            <person name="Kuspa A."/>
        </authorList>
    </citation>
    <scope>NUCLEOTIDE SEQUENCE [LARGE SCALE GENOMIC DNA]</scope>
    <source>
        <strain>AX4</strain>
    </source>
</reference>
<name>Y6787_DICDI</name>
<evidence type="ECO:0000255" key="1">
    <source>
        <dbReference type="PROSITE-ProRule" id="PRU00125"/>
    </source>
</evidence>
<organism>
    <name type="scientific">Dictyostelium discoideum</name>
    <name type="common">Social amoeba</name>
    <dbReference type="NCBI Taxonomy" id="44689"/>
    <lineage>
        <taxon>Eukaryota</taxon>
        <taxon>Amoebozoa</taxon>
        <taxon>Evosea</taxon>
        <taxon>Eumycetozoa</taxon>
        <taxon>Dictyostelia</taxon>
        <taxon>Dictyosteliales</taxon>
        <taxon>Dictyosteliaceae</taxon>
        <taxon>Dictyostelium</taxon>
    </lineage>
</organism>
<accession>Q55BI0</accession>
<sequence>MFTQSIPECYSCKQPITEICLTAFGLQWHPHHIGCNVCGKDFSDGSRCEEGPDGFAYCSKDLLDKFAPKCQKCKQAIIGQTTNAVGKTYHPEHFQCETCNMVLTGNFYHTDDGTPFCEKHYYEKIGFLCRHCDKPIISGKCITVGTTRFHPEHFFCQFCKSNLSGVGYKKQGDKCYCNECFLKLYG</sequence>
<proteinExistence type="predicted"/>
<dbReference type="EMBL" id="AAFI02000006">
    <property type="protein sequence ID" value="EAL71808.1"/>
    <property type="molecule type" value="Genomic_DNA"/>
</dbReference>
<dbReference type="RefSeq" id="XP_645632.1">
    <property type="nucleotide sequence ID" value="XM_640540.1"/>
</dbReference>
<dbReference type="SMR" id="Q55BI0"/>
<dbReference type="STRING" id="44689.Q55BI0"/>
<dbReference type="PaxDb" id="44689-DDB0216787"/>
<dbReference type="EnsemblProtists" id="EAL71808">
    <property type="protein sequence ID" value="EAL71808"/>
    <property type="gene ID" value="DDB_G0271356"/>
</dbReference>
<dbReference type="GeneID" id="8617824"/>
<dbReference type="KEGG" id="ddi:DDB_G0271356"/>
<dbReference type="dictyBase" id="DDB_G0271356"/>
<dbReference type="VEuPathDB" id="AmoebaDB:DDB_G0271356"/>
<dbReference type="eggNOG" id="KOG1703">
    <property type="taxonomic scope" value="Eukaryota"/>
</dbReference>
<dbReference type="HOGENOM" id="CLU_001357_0_2_1"/>
<dbReference type="InParanoid" id="Q55BI0"/>
<dbReference type="OMA" id="VCAGPCK"/>
<dbReference type="PhylomeDB" id="Q55BI0"/>
<dbReference type="Reactome" id="R-DDI-446388">
    <property type="pathway name" value="Regulation of cytoskeletal remodeling and cell spreading by IPP complex components"/>
</dbReference>
<dbReference type="PRO" id="PR:Q55BI0"/>
<dbReference type="Proteomes" id="UP000002195">
    <property type="component" value="Chromosome 2"/>
</dbReference>
<dbReference type="GO" id="GO:0046872">
    <property type="term" value="F:metal ion binding"/>
    <property type="evidence" value="ECO:0007669"/>
    <property type="project" value="UniProtKB-KW"/>
</dbReference>
<dbReference type="CDD" id="cd09339">
    <property type="entry name" value="LIM4_Paxillin_like"/>
    <property type="match status" value="1"/>
</dbReference>
<dbReference type="FunFam" id="2.10.110.10:FF:000009">
    <property type="entry name" value="Paxillin isoform 1"/>
    <property type="match status" value="1"/>
</dbReference>
<dbReference type="Gene3D" id="2.10.110.10">
    <property type="entry name" value="Cysteine Rich Protein"/>
    <property type="match status" value="3"/>
</dbReference>
<dbReference type="InterPro" id="IPR050604">
    <property type="entry name" value="PDZ-LIM_domain"/>
</dbReference>
<dbReference type="InterPro" id="IPR001781">
    <property type="entry name" value="Znf_LIM"/>
</dbReference>
<dbReference type="PANTHER" id="PTHR24214:SF62">
    <property type="entry name" value="LEUPAXIN"/>
    <property type="match status" value="1"/>
</dbReference>
<dbReference type="PANTHER" id="PTHR24214">
    <property type="entry name" value="PDZ AND LIM DOMAIN PROTEIN ZASP"/>
    <property type="match status" value="1"/>
</dbReference>
<dbReference type="Pfam" id="PF00412">
    <property type="entry name" value="LIM"/>
    <property type="match status" value="3"/>
</dbReference>
<dbReference type="SMART" id="SM00132">
    <property type="entry name" value="LIM"/>
    <property type="match status" value="3"/>
</dbReference>
<dbReference type="SUPFAM" id="SSF57716">
    <property type="entry name" value="Glucocorticoid receptor-like (DNA-binding domain)"/>
    <property type="match status" value="3"/>
</dbReference>
<dbReference type="PROSITE" id="PS00478">
    <property type="entry name" value="LIM_DOMAIN_1"/>
    <property type="match status" value="3"/>
</dbReference>
<dbReference type="PROSITE" id="PS50023">
    <property type="entry name" value="LIM_DOMAIN_2"/>
    <property type="match status" value="3"/>
</dbReference>
<feature type="chain" id="PRO_0000355630" description="LIM domain-containing protein DDB_G0271356">
    <location>
        <begin position="1"/>
        <end position="186"/>
    </location>
</feature>
<feature type="domain" description="LIM zinc-binding 1" evidence="1">
    <location>
        <begin position="7"/>
        <end position="67"/>
    </location>
</feature>
<feature type="domain" description="LIM zinc-binding 2" evidence="1">
    <location>
        <begin position="68"/>
        <end position="127"/>
    </location>
</feature>
<feature type="domain" description="LIM zinc-binding 3" evidence="1">
    <location>
        <begin position="128"/>
        <end position="186"/>
    </location>
</feature>